<feature type="signal peptide" evidence="2">
    <location>
        <begin position="1"/>
        <end position="23"/>
    </location>
</feature>
<feature type="chain" id="PRO_0000036020" description="UDP-glucuronosyltransferase 1A9">
    <location>
        <begin position="24"/>
        <end position="528"/>
    </location>
</feature>
<feature type="transmembrane region" description="Helical" evidence="2">
    <location>
        <begin position="486"/>
        <end position="506"/>
    </location>
</feature>
<feature type="modified residue" description="N6-succinyllysine" evidence="6">
    <location>
        <position position="97"/>
    </location>
</feature>
<feature type="glycosylation site" description="N-linked (GlcNAc...) asparagine" evidence="2">
    <location>
        <position position="69"/>
    </location>
</feature>
<feature type="glycosylation site" description="N-linked (GlcNAc...) asparagine" evidence="2">
    <location>
        <position position="290"/>
    </location>
</feature>
<feature type="glycosylation site" description="N-linked (GlcNAc...) asparagine" evidence="2">
    <location>
        <position position="428"/>
    </location>
</feature>
<feature type="sequence conflict" description="In Ref. 1; AAP48599 and 3; AAI46022/AAI38700." evidence="4" ref="1 3">
    <original>F</original>
    <variation>S</variation>
    <location>
        <position position="139"/>
    </location>
</feature>
<feature type="sequence conflict" description="In Ref. 1; AAP48599 and 3; AAI46022/AAI38700." evidence="4" ref="1 3">
    <original>A</original>
    <variation>G</variation>
    <location>
        <position position="179"/>
    </location>
</feature>
<feature type="sequence conflict" description="In Ref. 4; AAA40524." evidence="4" ref="4">
    <original>L</original>
    <variation>I</variation>
    <location>
        <position position="356"/>
    </location>
</feature>
<comment type="function">
    <text evidence="1">UDP-glucuronosyltransferase (UGT) that catalyzes phase II biotransformation reactions in which lipophilic substrates are conjugated with glucuronic acid to increase the metabolite's water solubility, thereby facilitating excretion into either the urine or bile. Essential for the elimination and detoxification of drugs, xenobiotics and endogenous compounds. Catalyzes the glucuronidation of endogenous estrogen hormones such as estradiol and estrone. Involved in the glucuronidation of arachidonic acid (AA) and AA-derived eicosanoids including 15-HETE, PGB1 and F2-isoprostanes (8-iso-PGF2alpha and 5-epi-5-F2t-IsoP). Glucuronates the phytochemical ferulic acid efficently at both the phenolic or the carboxylic acid group. Also catalyzes the glucuronidation of the isoflavones genistein, daidzein, glycitein, formononetin, biochanin A and prunetin, which are phytoestrogens with anticancer and cardiovascular properties. Involved in the glucuronidation of the AGTR1 angiotensin receptor antagonist caderastan, a drug which can inhibit the effect of angiotensin II. Involved in the biotransformation of 7-ethyl-10-hydroxycamptothecin (SN-38), the pharmacologically active metabolite of the anticancer drug irinotecan. Also metabolizes mycophenolate, an immunosuppressive agent.</text>
</comment>
<comment type="catalytic activity">
    <reaction evidence="1">
        <text>glucuronate acceptor + UDP-alpha-D-glucuronate = acceptor beta-D-glucuronoside + UDP + H(+)</text>
        <dbReference type="Rhea" id="RHEA:21032"/>
        <dbReference type="ChEBI" id="CHEBI:15378"/>
        <dbReference type="ChEBI" id="CHEBI:58052"/>
        <dbReference type="ChEBI" id="CHEBI:58223"/>
        <dbReference type="ChEBI" id="CHEBI:132367"/>
        <dbReference type="ChEBI" id="CHEBI:132368"/>
        <dbReference type="EC" id="2.4.1.17"/>
    </reaction>
    <physiologicalReaction direction="left-to-right" evidence="1">
        <dbReference type="Rhea" id="RHEA:21033"/>
    </physiologicalReaction>
</comment>
<comment type="catalytic activity">
    <reaction evidence="1">
        <text>2-hydroxy-17beta-estradiol + UDP-alpha-D-glucuronate = 2-hydroxy-17beta-estradiol 3-O-(beta-D-glucuronate) + UDP + H(+)</text>
        <dbReference type="Rhea" id="RHEA:53004"/>
        <dbReference type="ChEBI" id="CHEBI:15378"/>
        <dbReference type="ChEBI" id="CHEBI:28744"/>
        <dbReference type="ChEBI" id="CHEBI:58052"/>
        <dbReference type="ChEBI" id="CHEBI:58223"/>
        <dbReference type="ChEBI" id="CHEBI:136931"/>
    </reaction>
    <physiologicalReaction direction="left-to-right" evidence="1">
        <dbReference type="Rhea" id="RHEA:53005"/>
    </physiologicalReaction>
</comment>
<comment type="catalytic activity">
    <reaction evidence="1">
        <text>4-hydroxy-17beta-estradiol + UDP-alpha-D-glucuronate = 17beta-estradiol 4-O-(beta-D-glucuronate) + UDP + H(+)</text>
        <dbReference type="Rhea" id="RHEA:53040"/>
        <dbReference type="ChEBI" id="CHEBI:15378"/>
        <dbReference type="ChEBI" id="CHEBI:58052"/>
        <dbReference type="ChEBI" id="CHEBI:58223"/>
        <dbReference type="ChEBI" id="CHEBI:62845"/>
        <dbReference type="ChEBI" id="CHEBI:136937"/>
    </reaction>
    <physiologicalReaction direction="left-to-right" evidence="1">
        <dbReference type="Rhea" id="RHEA:53041"/>
    </physiologicalReaction>
</comment>
<comment type="catalytic activity">
    <reaction evidence="1">
        <text>2-hydroxyestrone + UDP-alpha-D-glucuronate = 2-hydroxyestrone 3-O-(beta-D-glucuronate) + UDP + H(+)</text>
        <dbReference type="Rhea" id="RHEA:53048"/>
        <dbReference type="ChEBI" id="CHEBI:1156"/>
        <dbReference type="ChEBI" id="CHEBI:15378"/>
        <dbReference type="ChEBI" id="CHEBI:58052"/>
        <dbReference type="ChEBI" id="CHEBI:58223"/>
        <dbReference type="ChEBI" id="CHEBI:136967"/>
    </reaction>
    <physiologicalReaction direction="left-to-right" evidence="1">
        <dbReference type="Rhea" id="RHEA:53049"/>
    </physiologicalReaction>
</comment>
<comment type="catalytic activity">
    <reaction evidence="1">
        <text>4-hydroxyestrone + UDP-alpha-D-glucuronate = estrone 4-O-(beta-D-glucuronate) + UDP + H(+)</text>
        <dbReference type="Rhea" id="RHEA:53060"/>
        <dbReference type="ChEBI" id="CHEBI:15378"/>
        <dbReference type="ChEBI" id="CHEBI:58052"/>
        <dbReference type="ChEBI" id="CHEBI:58223"/>
        <dbReference type="ChEBI" id="CHEBI:87602"/>
        <dbReference type="ChEBI" id="CHEBI:136970"/>
    </reaction>
    <physiologicalReaction direction="left-to-right" evidence="1">
        <dbReference type="Rhea" id="RHEA:53061"/>
    </physiologicalReaction>
</comment>
<comment type="catalytic activity">
    <reaction evidence="1">
        <text>prunetin + UDP-alpha-D-glucuronate = prunetin-5-O-beta-D-glucuronide + UDP</text>
        <dbReference type="Rhea" id="RHEA:63612"/>
        <dbReference type="ChEBI" id="CHEBI:58052"/>
        <dbReference type="ChEBI" id="CHEBI:58223"/>
        <dbReference type="ChEBI" id="CHEBI:147403"/>
        <dbReference type="ChEBI" id="CHEBI:147405"/>
    </reaction>
    <physiologicalReaction direction="left-to-right" evidence="1">
        <dbReference type="Rhea" id="RHEA:63613"/>
    </physiologicalReaction>
</comment>
<comment type="catalytic activity">
    <reaction evidence="1">
        <text>8-iso-prostaglandin F2alpha + UDP-alpha-D-glucuronate = 8-iso-prostaglandin F2alpha-glucuronide + UDP + H(+)</text>
        <dbReference type="Rhea" id="RHEA:79907"/>
        <dbReference type="ChEBI" id="CHEBI:15378"/>
        <dbReference type="ChEBI" id="CHEBI:58052"/>
        <dbReference type="ChEBI" id="CHEBI:58223"/>
        <dbReference type="ChEBI" id="CHEBI:77768"/>
        <dbReference type="ChEBI" id="CHEBI:229786"/>
    </reaction>
    <physiologicalReaction direction="left-to-right" evidence="1">
        <dbReference type="Rhea" id="RHEA:79908"/>
    </physiologicalReaction>
</comment>
<comment type="catalytic activity">
    <reaction evidence="1">
        <text>5-epi-5-F2t-IsoP + UDP-alpha-D-glucuronate = 5-epi-5-F2t-IsoP-glucuronide + UDP + H(+)</text>
        <dbReference type="Rhea" id="RHEA:79911"/>
        <dbReference type="ChEBI" id="CHEBI:15378"/>
        <dbReference type="ChEBI" id="CHEBI:58052"/>
        <dbReference type="ChEBI" id="CHEBI:58223"/>
        <dbReference type="ChEBI" id="CHEBI:229787"/>
        <dbReference type="ChEBI" id="CHEBI:229788"/>
    </reaction>
    <physiologicalReaction direction="left-to-right" evidence="1">
        <dbReference type="Rhea" id="RHEA:79912"/>
    </physiologicalReaction>
</comment>
<comment type="catalytic activity">
    <reaction evidence="1">
        <text>(5Z,8Z,11Z,14Z)-eicosatetraenoate + UDP-alpha-D-glucuronate = O-[(5Z),(8Z),(11Z),(14Z)-eicosatetraenoyl]-beta-D-glucuronate + UDP</text>
        <dbReference type="Rhea" id="RHEA:79915"/>
        <dbReference type="ChEBI" id="CHEBI:32395"/>
        <dbReference type="ChEBI" id="CHEBI:58052"/>
        <dbReference type="ChEBI" id="CHEBI:58223"/>
        <dbReference type="ChEBI" id="CHEBI:231327"/>
    </reaction>
    <physiologicalReaction direction="left-to-right" evidence="1">
        <dbReference type="Rhea" id="RHEA:79916"/>
    </physiologicalReaction>
</comment>
<comment type="catalytic activity">
    <reaction evidence="1">
        <text>15-hydroxy-(5Z,8Z,11Z,13E)-eicosatetraenoate + UDP-alpha-D-glucuronate = 15-O-(beta-D-glucuronosyl)-(5Z,8Z,11Z,14Z)-eicosatetraenoate + UDP + H(+)</text>
        <dbReference type="Rhea" id="RHEA:79919"/>
        <dbReference type="ChEBI" id="CHEBI:15378"/>
        <dbReference type="ChEBI" id="CHEBI:58052"/>
        <dbReference type="ChEBI" id="CHEBI:58223"/>
        <dbReference type="ChEBI" id="CHEBI:78832"/>
        <dbReference type="ChEBI" id="CHEBI:231329"/>
    </reaction>
    <physiologicalReaction direction="left-to-right" evidence="1">
        <dbReference type="Rhea" id="RHEA:79920"/>
    </physiologicalReaction>
</comment>
<comment type="catalytic activity">
    <reaction evidence="1">
        <text>prostaglandin B1 + UDP-alpha-D-glucuronate = 15-O-(beta-D-glucuronosyl)-prostaglandin B1 + UDP + H(+)</text>
        <dbReference type="Rhea" id="RHEA:79935"/>
        <dbReference type="ChEBI" id="CHEBI:15378"/>
        <dbReference type="ChEBI" id="CHEBI:58052"/>
        <dbReference type="ChEBI" id="CHEBI:58223"/>
        <dbReference type="ChEBI" id="CHEBI:133393"/>
        <dbReference type="ChEBI" id="CHEBI:231330"/>
    </reaction>
    <physiologicalReaction direction="left-to-right" evidence="1">
        <dbReference type="Rhea" id="RHEA:79936"/>
    </physiologicalReaction>
</comment>
<comment type="catalytic activity">
    <reaction evidence="1">
        <text>(E)-ferulate + UDP-alpha-D-glucuronate = (E)-4-O-(beta-D-glucuronosyl)-ferulate + UDP + H(+)</text>
        <dbReference type="Rhea" id="RHEA:79951"/>
        <dbReference type="ChEBI" id="CHEBI:15378"/>
        <dbReference type="ChEBI" id="CHEBI:29749"/>
        <dbReference type="ChEBI" id="CHEBI:58052"/>
        <dbReference type="ChEBI" id="CHEBI:58223"/>
        <dbReference type="ChEBI" id="CHEBI:231331"/>
    </reaction>
    <physiologicalReaction direction="left-to-right" evidence="1">
        <dbReference type="Rhea" id="RHEA:79952"/>
    </physiologicalReaction>
</comment>
<comment type="catalytic activity">
    <reaction evidence="1">
        <text>(E)-ferulate + UDP-alpha-D-glucuronate = (E)-ferulic acid beta-D-glucuronate ester + UDP</text>
        <dbReference type="Rhea" id="RHEA:79955"/>
        <dbReference type="ChEBI" id="CHEBI:29749"/>
        <dbReference type="ChEBI" id="CHEBI:58052"/>
        <dbReference type="ChEBI" id="CHEBI:58223"/>
        <dbReference type="ChEBI" id="CHEBI:231332"/>
    </reaction>
    <physiologicalReaction direction="left-to-right" evidence="1">
        <dbReference type="Rhea" id="RHEA:79956"/>
    </physiologicalReaction>
</comment>
<comment type="catalytic activity">
    <reaction evidence="1">
        <text>candesartan + UDP-alpha-D-glucuronate = candesartan O-beta-D-glucuronoside + UDP</text>
        <dbReference type="Rhea" id="RHEA:63724"/>
        <dbReference type="ChEBI" id="CHEBI:58052"/>
        <dbReference type="ChEBI" id="CHEBI:58223"/>
        <dbReference type="ChEBI" id="CHEBI:149509"/>
        <dbReference type="ChEBI" id="CHEBI:149522"/>
    </reaction>
    <physiologicalReaction direction="left-to-right" evidence="1">
        <dbReference type="Rhea" id="RHEA:63725"/>
    </physiologicalReaction>
</comment>
<comment type="catalytic activity">
    <reaction evidence="1">
        <text>SN-38 + UDP-alpha-D-glucuronate = SN-38 O-beta-D-glucuronide + UDP + H(+)</text>
        <dbReference type="Rhea" id="RHEA:63696"/>
        <dbReference type="ChEBI" id="CHEBI:8988"/>
        <dbReference type="ChEBI" id="CHEBI:15378"/>
        <dbReference type="ChEBI" id="CHEBI:58052"/>
        <dbReference type="ChEBI" id="CHEBI:58223"/>
        <dbReference type="ChEBI" id="CHEBI:149482"/>
    </reaction>
    <physiologicalReaction direction="left-to-right" evidence="1">
        <dbReference type="Rhea" id="RHEA:63697"/>
    </physiologicalReaction>
</comment>
<comment type="catalytic activity">
    <reaction evidence="1">
        <text>mycophenolate + UDP-alpha-D-glucuronate = mycophenolate 7-O-beta-D-glucuronide + UDP + H(+)</text>
        <dbReference type="Rhea" id="RHEA:63704"/>
        <dbReference type="ChEBI" id="CHEBI:15378"/>
        <dbReference type="ChEBI" id="CHEBI:58052"/>
        <dbReference type="ChEBI" id="CHEBI:58223"/>
        <dbReference type="ChEBI" id="CHEBI:62932"/>
        <dbReference type="ChEBI" id="CHEBI:149486"/>
    </reaction>
    <physiologicalReaction direction="left-to-right" evidence="1">
        <dbReference type="Rhea" id="RHEA:63705"/>
    </physiologicalReaction>
</comment>
<comment type="subunit">
    <text evidence="1">Homodimer. Homooligomer. Interacts with UGT1A1, UGT1A3, UGT1A4, UGT1A6, UGT1A7, UGT1A8 and UGT1A10 to form heterodimers.</text>
</comment>
<comment type="subcellular location">
    <subcellularLocation>
        <location evidence="1">Endoplasmic reticulum membrane</location>
        <topology evidence="2">Single-pass membrane protein</topology>
    </subcellularLocation>
</comment>
<comment type="alternative products">
    <event type="alternative splicing"/>
    <isoform>
        <id>Q62452-1</id>
        <name>1</name>
        <sequence type="displayed"/>
    </isoform>
    <text evidence="1">UGT1A9 is one of the isoforms produced at the UGT1A complex locus. The UGT1A complex locus produces different isoforms based on alternative use of promoters, first exons and terminal exons.</text>
</comment>
<comment type="tissue specificity">
    <text evidence="3">Highly expressed in liver and at lower levels in stomach and kidney.</text>
</comment>
<comment type="similarity">
    <text evidence="4">Belongs to the UDP-glycosyltransferase family.</text>
</comment>
<comment type="sequence caution" evidence="4">
    <conflict type="erroneous initiation">
        <sequence resource="EMBL-CDS" id="AAA40524"/>
    </conflict>
    <text>Truncated N-terminus.</text>
</comment>
<organism>
    <name type="scientific">Mus musculus</name>
    <name type="common">Mouse</name>
    <dbReference type="NCBI Taxonomy" id="10090"/>
    <lineage>
        <taxon>Eukaryota</taxon>
        <taxon>Metazoa</taxon>
        <taxon>Chordata</taxon>
        <taxon>Craniata</taxon>
        <taxon>Vertebrata</taxon>
        <taxon>Euteleostomi</taxon>
        <taxon>Mammalia</taxon>
        <taxon>Eutheria</taxon>
        <taxon>Euarchontoglires</taxon>
        <taxon>Glires</taxon>
        <taxon>Rodentia</taxon>
        <taxon>Myomorpha</taxon>
        <taxon>Muroidea</taxon>
        <taxon>Muridae</taxon>
        <taxon>Murinae</taxon>
        <taxon>Mus</taxon>
        <taxon>Mus</taxon>
    </lineage>
</organism>
<dbReference type="EC" id="2.4.1.17" evidence="1"/>
<dbReference type="EMBL" id="AY227200">
    <property type="protein sequence ID" value="AAP48599.1"/>
    <property type="molecule type" value="mRNA"/>
</dbReference>
<dbReference type="EMBL" id="AC087780">
    <property type="status" value="NOT_ANNOTATED_CDS"/>
    <property type="molecule type" value="Genomic_DNA"/>
</dbReference>
<dbReference type="EMBL" id="AC087801">
    <property type="status" value="NOT_ANNOTATED_CDS"/>
    <property type="molecule type" value="Genomic_DNA"/>
</dbReference>
<dbReference type="EMBL" id="BC138699">
    <property type="protein sequence ID" value="AAI38700.1"/>
    <property type="molecule type" value="mRNA"/>
</dbReference>
<dbReference type="EMBL" id="BC146021">
    <property type="protein sequence ID" value="AAI46022.1"/>
    <property type="molecule type" value="mRNA"/>
</dbReference>
<dbReference type="EMBL" id="L27122">
    <property type="protein sequence ID" value="AAA40524.1"/>
    <property type="status" value="ALT_INIT"/>
    <property type="molecule type" value="mRNA"/>
</dbReference>
<dbReference type="CCDS" id="CCDS15138.1">
    <molecule id="Q62452-1"/>
</dbReference>
<dbReference type="RefSeq" id="NP_964006.2">
    <molecule id="Q62452-1"/>
    <property type="nucleotide sequence ID" value="NM_201644.2"/>
</dbReference>
<dbReference type="SMR" id="Q62452"/>
<dbReference type="FunCoup" id="Q62452">
    <property type="interactions" value="862"/>
</dbReference>
<dbReference type="IntAct" id="Q62452">
    <property type="interactions" value="1"/>
</dbReference>
<dbReference type="STRING" id="10090.ENSMUSP00000073444"/>
<dbReference type="CAZy" id="GT1">
    <property type="family name" value="Glycosyltransferase Family 1"/>
</dbReference>
<dbReference type="GlyCosmos" id="Q62452">
    <property type="glycosylation" value="3 sites, No reported glycans"/>
</dbReference>
<dbReference type="GlyGen" id="Q62452">
    <property type="glycosylation" value="3 sites"/>
</dbReference>
<dbReference type="iPTMnet" id="Q62452"/>
<dbReference type="PhosphoSitePlus" id="Q62452"/>
<dbReference type="SwissPalm" id="Q62452"/>
<dbReference type="jPOST" id="Q62452"/>
<dbReference type="PaxDb" id="10090-ENSMUSP00000073444"/>
<dbReference type="PeptideAtlas" id="Q62452"/>
<dbReference type="ProteomicsDB" id="298467">
    <molecule id="Q62452-1"/>
</dbReference>
<dbReference type="Pumba" id="Q62452"/>
<dbReference type="DNASU" id="394434"/>
<dbReference type="Ensembl" id="ENSMUST00000073772.5">
    <molecule id="Q62452-1"/>
    <property type="protein sequence ID" value="ENSMUSP00000073444.5"/>
    <property type="gene ID" value="ENSMUSG00000090175.2"/>
</dbReference>
<dbReference type="GeneID" id="394434"/>
<dbReference type="KEGG" id="mmu:394434"/>
<dbReference type="UCSC" id="uc007byb.1">
    <molecule id="Q62452-1"/>
    <property type="organism name" value="mouse"/>
</dbReference>
<dbReference type="AGR" id="MGI:3576092"/>
<dbReference type="CTD" id="54600"/>
<dbReference type="MGI" id="MGI:3576092">
    <property type="gene designation" value="Ugt1a9"/>
</dbReference>
<dbReference type="VEuPathDB" id="HostDB:ENSMUSG00000090175"/>
<dbReference type="eggNOG" id="KOG1192">
    <property type="taxonomic scope" value="Eukaryota"/>
</dbReference>
<dbReference type="GeneTree" id="ENSGT00940000163976"/>
<dbReference type="HOGENOM" id="CLU_012949_3_2_1"/>
<dbReference type="InParanoid" id="Q62452"/>
<dbReference type="OMA" id="YVPRFGM"/>
<dbReference type="OrthoDB" id="42360at9989"/>
<dbReference type="PhylomeDB" id="Q62452"/>
<dbReference type="TreeFam" id="TF315472"/>
<dbReference type="Reactome" id="R-MMU-156588">
    <property type="pathway name" value="Glucuronidation"/>
</dbReference>
<dbReference type="Reactome" id="R-MMU-9749641">
    <property type="pathway name" value="Aspirin ADME"/>
</dbReference>
<dbReference type="Reactome" id="R-MMU-9753281">
    <property type="pathway name" value="Paracetamol ADME"/>
</dbReference>
<dbReference type="BioGRID-ORCS" id="394434">
    <property type="hits" value="3 hits in 79 CRISPR screens"/>
</dbReference>
<dbReference type="PRO" id="PR:Q62452"/>
<dbReference type="Proteomes" id="UP000000589">
    <property type="component" value="Chromosome 1"/>
</dbReference>
<dbReference type="RNAct" id="Q62452">
    <property type="molecule type" value="protein"/>
</dbReference>
<dbReference type="Bgee" id="ENSMUSG00000090175">
    <property type="expression patterns" value="Expressed in hepatobiliary system and 23 other cell types or tissues"/>
</dbReference>
<dbReference type="GO" id="GO:0005789">
    <property type="term" value="C:endoplasmic reticulum membrane"/>
    <property type="evidence" value="ECO:0007669"/>
    <property type="project" value="UniProtKB-SubCell"/>
</dbReference>
<dbReference type="GO" id="GO:0015020">
    <property type="term" value="F:glucuronosyltransferase activity"/>
    <property type="evidence" value="ECO:0007669"/>
    <property type="project" value="UniProtKB-EC"/>
</dbReference>
<dbReference type="GO" id="GO:0006629">
    <property type="term" value="P:lipid metabolic process"/>
    <property type="evidence" value="ECO:0007669"/>
    <property type="project" value="UniProtKB-KW"/>
</dbReference>
<dbReference type="CDD" id="cd03784">
    <property type="entry name" value="GT1_Gtf-like"/>
    <property type="match status" value="1"/>
</dbReference>
<dbReference type="FunFam" id="3.40.50.2000:FF:000001">
    <property type="entry name" value="UDP-glucuronosyltransferase"/>
    <property type="match status" value="1"/>
</dbReference>
<dbReference type="FunFam" id="3.40.50.2000:FF:000092">
    <property type="entry name" value="UDP-glucuronosyltransferase"/>
    <property type="match status" value="1"/>
</dbReference>
<dbReference type="Gene3D" id="3.40.50.2000">
    <property type="entry name" value="Glycogen Phosphorylase B"/>
    <property type="match status" value="2"/>
</dbReference>
<dbReference type="InterPro" id="IPR050271">
    <property type="entry name" value="UDP-glycosyltransferase"/>
</dbReference>
<dbReference type="InterPro" id="IPR002213">
    <property type="entry name" value="UDP_glucos_trans"/>
</dbReference>
<dbReference type="InterPro" id="IPR035595">
    <property type="entry name" value="UDP_glycos_trans_CS"/>
</dbReference>
<dbReference type="PANTHER" id="PTHR48043">
    <property type="entry name" value="EG:EG0003.4 PROTEIN-RELATED"/>
    <property type="match status" value="1"/>
</dbReference>
<dbReference type="PANTHER" id="PTHR48043:SF161">
    <property type="entry name" value="UDP GLUCURONOSYLTRANSFERASE FAMILY 1 MEMBER A1"/>
    <property type="match status" value="1"/>
</dbReference>
<dbReference type="Pfam" id="PF00201">
    <property type="entry name" value="UDPGT"/>
    <property type="match status" value="1"/>
</dbReference>
<dbReference type="SUPFAM" id="SSF53756">
    <property type="entry name" value="UDP-Glycosyltransferase/glycogen phosphorylase"/>
    <property type="match status" value="1"/>
</dbReference>
<dbReference type="PROSITE" id="PS00375">
    <property type="entry name" value="UDPGT"/>
    <property type="match status" value="1"/>
</dbReference>
<evidence type="ECO:0000250" key="1">
    <source>
        <dbReference type="UniProtKB" id="O60656"/>
    </source>
</evidence>
<evidence type="ECO:0000255" key="2"/>
<evidence type="ECO:0000269" key="3">
    <source>
    </source>
</evidence>
<evidence type="ECO:0000305" key="4"/>
<evidence type="ECO:0000312" key="5">
    <source>
        <dbReference type="MGI" id="MGI:3576092"/>
    </source>
</evidence>
<evidence type="ECO:0007744" key="6">
    <source>
    </source>
</evidence>
<reference key="1">
    <citation type="journal article" date="2004" name="Genome Res.">
        <title>Multiple variable first exons: a mechanism for cell- and tissue-specific gene regulation.</title>
        <authorList>
            <person name="Zhang T."/>
            <person name="Haws P."/>
            <person name="Wu Q."/>
        </authorList>
    </citation>
    <scope>NUCLEOTIDE SEQUENCE [MRNA]</scope>
    <scope>TISSUE SPECIFICITY</scope>
    <source>
        <tissue>Stomach</tissue>
    </source>
</reference>
<reference key="2">
    <citation type="journal article" date="2009" name="PLoS Biol.">
        <title>Lineage-specific biology revealed by a finished genome assembly of the mouse.</title>
        <authorList>
            <person name="Church D.M."/>
            <person name="Goodstadt L."/>
            <person name="Hillier L.W."/>
            <person name="Zody M.C."/>
            <person name="Goldstein S."/>
            <person name="She X."/>
            <person name="Bult C.J."/>
            <person name="Agarwala R."/>
            <person name="Cherry J.L."/>
            <person name="DiCuccio M."/>
            <person name="Hlavina W."/>
            <person name="Kapustin Y."/>
            <person name="Meric P."/>
            <person name="Maglott D."/>
            <person name="Birtle Z."/>
            <person name="Marques A.C."/>
            <person name="Graves T."/>
            <person name="Zhou S."/>
            <person name="Teague B."/>
            <person name="Potamousis K."/>
            <person name="Churas C."/>
            <person name="Place M."/>
            <person name="Herschleb J."/>
            <person name="Runnheim R."/>
            <person name="Forrest D."/>
            <person name="Amos-Landgraf J."/>
            <person name="Schwartz D.C."/>
            <person name="Cheng Z."/>
            <person name="Lindblad-Toh K."/>
            <person name="Eichler E.E."/>
            <person name="Ponting C.P."/>
        </authorList>
    </citation>
    <scope>NUCLEOTIDE SEQUENCE [LARGE SCALE GENOMIC DNA]</scope>
    <source>
        <strain>C57BL/6J</strain>
    </source>
</reference>
<reference key="3">
    <citation type="journal article" date="2004" name="Genome Res.">
        <title>The status, quality, and expansion of the NIH full-length cDNA project: the Mammalian Gene Collection (MGC).</title>
        <authorList>
            <consortium name="The MGC Project Team"/>
        </authorList>
    </citation>
    <scope>NUCLEOTIDE SEQUENCE [LARGE SCALE MRNA]</scope>
</reference>
<reference key="4">
    <citation type="journal article" date="1993" name="Pharm. Res.">
        <title>Molecular cloning of two cDNAs encoding the mouse bilirubin/phenol family of UDP-glucuronosyltransferases (mUGTBr/p).</title>
        <authorList>
            <person name="Kong A.N."/>
            <person name="Ma M."/>
            <person name="Tao D."/>
            <person name="Yang L."/>
        </authorList>
    </citation>
    <scope>NUCLEOTIDE SEQUENCE [MRNA] OF 9-528</scope>
    <source>
        <strain>BALB/cJ</strain>
        <tissue>Liver</tissue>
    </source>
</reference>
<reference key="5">
    <citation type="journal article" date="2010" name="Cell">
        <title>A tissue-specific atlas of mouse protein phosphorylation and expression.</title>
        <authorList>
            <person name="Huttlin E.L."/>
            <person name="Jedrychowski M.P."/>
            <person name="Elias J.E."/>
            <person name="Goswami T."/>
            <person name="Rad R."/>
            <person name="Beausoleil S.A."/>
            <person name="Villen J."/>
            <person name="Haas W."/>
            <person name="Sowa M.E."/>
            <person name="Gygi S.P."/>
        </authorList>
    </citation>
    <scope>IDENTIFICATION BY MASS SPECTROMETRY [LARGE SCALE ANALYSIS]</scope>
    <source>
        <tissue>Liver</tissue>
    </source>
</reference>
<reference key="6">
    <citation type="journal article" date="2013" name="Mol. Cell">
        <title>SIRT5-mediated lysine desuccinylation impacts diverse metabolic pathways.</title>
        <authorList>
            <person name="Park J."/>
            <person name="Chen Y."/>
            <person name="Tishkoff D.X."/>
            <person name="Peng C."/>
            <person name="Tan M."/>
            <person name="Dai L."/>
            <person name="Xie Z."/>
            <person name="Zhang Y."/>
            <person name="Zwaans B.M."/>
            <person name="Skinner M.E."/>
            <person name="Lombard D.B."/>
            <person name="Zhao Y."/>
        </authorList>
    </citation>
    <scope>SUCCINYLATION [LARGE SCALE ANALYSIS] AT LYS-97</scope>
    <scope>IDENTIFICATION BY MASS SPECTROMETRY [LARGE SCALE ANALYSIS]</scope>
    <source>
        <tissue>Liver</tissue>
    </source>
</reference>
<sequence length="528" mass="60008">MAPVAFPTSFFLCLLLASGLAQAGRLLVVPMDGSHWFTMQMVVEKLIHRGHEVVVVIPEVSWQLGKSLNCTVKTYSISHTLEDLDREFKYLSYTQWKTPEHSIRSFLTGSARGFFELTFSHCRSLFNDKKLVEYLKQRFFDAVFLDPFDVCGLIVAKYFSLPSVIFARGVFCDYLEEGAQCPSLPSYVPRLFSKYTDTMTFKERVWNHLIYIEEHAFCSYFLRTAVEVASEILQTPVTMTDLFSPVSIWLLRTDFVLEFPRPVMPNMVFIGGINCLQKKSLSKEFEAYVNASGEHGIVVFSLGSMVSEIPEKKAMEIAEALGRIPQTVLWRYTGTRPSNLAKNTILVKWLPQNDLLGHPKTRAFITHSGSHGIYEGICNGVPMVMMPLFGDQMDNAKRMETRGAGVTLNVLEMTADDLENALKTVINNKSYKENIMRLSSLHKDRPIEPLDLAVFWVEYVMRHKGAPHLRPAAHDLTWYQYHSLDVIGFLLAIVLTVVFIVFKCCAYGCRKCFGGKGRVKKSHKSKTH</sequence>
<accession>Q62452</accession>
<accession>A6H6W3</accession>
<accession>E9QN27</accession>
<accession>Q6XL44</accession>
<proteinExistence type="evidence at protein level"/>
<name>UD19_MOUSE</name>
<gene>
    <name evidence="5" type="primary">Ugt1a9</name>
    <name type="synonym">Ugt1</name>
    <name type="synonym">Ugt1a12</name>
</gene>
<protein>
    <recommendedName>
        <fullName evidence="1">UDP-glucuronosyltransferase 1A9</fullName>
        <shortName evidence="1">UGT1A9</shortName>
        <ecNumber evidence="1">2.4.1.17</ecNumber>
    </recommendedName>
    <alternativeName>
        <fullName>UDP-glucuronosyltransferase 1-7</fullName>
        <shortName>UDPGT</shortName>
    </alternativeName>
    <alternativeName>
        <fullName>UDP-glucuronosyltransferase 1-9</fullName>
        <shortName>UDPGT 1-9</shortName>
        <shortName>UGT1*9</shortName>
        <shortName>UGT1-09</shortName>
        <shortName>UGT1.9</shortName>
    </alternativeName>
    <alternativeName>
        <fullName>UGT1A12</fullName>
    </alternativeName>
    <alternativeName>
        <fullName>UGTP4</fullName>
    </alternativeName>
</protein>
<keyword id="KW-0025">Alternative splicing</keyword>
<keyword id="KW-0256">Endoplasmic reticulum</keyword>
<keyword id="KW-0325">Glycoprotein</keyword>
<keyword id="KW-0328">Glycosyltransferase</keyword>
<keyword id="KW-0443">Lipid metabolism</keyword>
<keyword id="KW-0472">Membrane</keyword>
<keyword id="KW-1185">Reference proteome</keyword>
<keyword id="KW-0732">Signal</keyword>
<keyword id="KW-0808">Transferase</keyword>
<keyword id="KW-0812">Transmembrane</keyword>
<keyword id="KW-1133">Transmembrane helix</keyword>